<name>QUEC_CHRSD</name>
<evidence type="ECO:0000255" key="1">
    <source>
        <dbReference type="HAMAP-Rule" id="MF_01633"/>
    </source>
</evidence>
<evidence type="ECO:0000256" key="2">
    <source>
        <dbReference type="SAM" id="MobiDB-lite"/>
    </source>
</evidence>
<dbReference type="EC" id="6.3.4.20" evidence="1"/>
<dbReference type="EMBL" id="CP000285">
    <property type="protein sequence ID" value="ABE59389.1"/>
    <property type="molecule type" value="Genomic_DNA"/>
</dbReference>
<dbReference type="RefSeq" id="WP_011507335.1">
    <property type="nucleotide sequence ID" value="NC_007963.1"/>
</dbReference>
<dbReference type="SMR" id="Q1QVW9"/>
<dbReference type="STRING" id="290398.Csal_2038"/>
<dbReference type="GeneID" id="95334749"/>
<dbReference type="KEGG" id="csa:Csal_2038"/>
<dbReference type="eggNOG" id="COG0603">
    <property type="taxonomic scope" value="Bacteria"/>
</dbReference>
<dbReference type="HOGENOM" id="CLU_081854_1_0_6"/>
<dbReference type="OrthoDB" id="9789567at2"/>
<dbReference type="UniPathway" id="UPA00391"/>
<dbReference type="Proteomes" id="UP000000239">
    <property type="component" value="Chromosome"/>
</dbReference>
<dbReference type="GO" id="GO:0005524">
    <property type="term" value="F:ATP binding"/>
    <property type="evidence" value="ECO:0007669"/>
    <property type="project" value="UniProtKB-UniRule"/>
</dbReference>
<dbReference type="GO" id="GO:0016879">
    <property type="term" value="F:ligase activity, forming carbon-nitrogen bonds"/>
    <property type="evidence" value="ECO:0007669"/>
    <property type="project" value="UniProtKB-UniRule"/>
</dbReference>
<dbReference type="GO" id="GO:0008270">
    <property type="term" value="F:zinc ion binding"/>
    <property type="evidence" value="ECO:0007669"/>
    <property type="project" value="UniProtKB-UniRule"/>
</dbReference>
<dbReference type="GO" id="GO:0008616">
    <property type="term" value="P:queuosine biosynthetic process"/>
    <property type="evidence" value="ECO:0007669"/>
    <property type="project" value="UniProtKB-UniRule"/>
</dbReference>
<dbReference type="CDD" id="cd01995">
    <property type="entry name" value="QueC-like"/>
    <property type="match status" value="1"/>
</dbReference>
<dbReference type="Gene3D" id="3.40.50.620">
    <property type="entry name" value="HUPs"/>
    <property type="match status" value="1"/>
</dbReference>
<dbReference type="HAMAP" id="MF_01633">
    <property type="entry name" value="QueC"/>
    <property type="match status" value="1"/>
</dbReference>
<dbReference type="InterPro" id="IPR018317">
    <property type="entry name" value="QueC"/>
</dbReference>
<dbReference type="InterPro" id="IPR014729">
    <property type="entry name" value="Rossmann-like_a/b/a_fold"/>
</dbReference>
<dbReference type="NCBIfam" id="TIGR00364">
    <property type="entry name" value="7-cyano-7-deazaguanine synthase QueC"/>
    <property type="match status" value="1"/>
</dbReference>
<dbReference type="PANTHER" id="PTHR42914">
    <property type="entry name" value="7-CYANO-7-DEAZAGUANINE SYNTHASE"/>
    <property type="match status" value="1"/>
</dbReference>
<dbReference type="PANTHER" id="PTHR42914:SF1">
    <property type="entry name" value="7-CYANO-7-DEAZAGUANINE SYNTHASE"/>
    <property type="match status" value="1"/>
</dbReference>
<dbReference type="Pfam" id="PF06508">
    <property type="entry name" value="QueC"/>
    <property type="match status" value="1"/>
</dbReference>
<dbReference type="PIRSF" id="PIRSF006293">
    <property type="entry name" value="ExsB"/>
    <property type="match status" value="1"/>
</dbReference>
<dbReference type="SUPFAM" id="SSF52402">
    <property type="entry name" value="Adenine nucleotide alpha hydrolases-like"/>
    <property type="match status" value="1"/>
</dbReference>
<feature type="chain" id="PRO_0000246829" description="7-cyano-7-deazaguanine synthase">
    <location>
        <begin position="1"/>
        <end position="251"/>
    </location>
</feature>
<feature type="region of interest" description="Disordered" evidence="2">
    <location>
        <begin position="1"/>
        <end position="21"/>
    </location>
</feature>
<feature type="binding site" evidence="1">
    <location>
        <begin position="35"/>
        <end position="45"/>
    </location>
    <ligand>
        <name>ATP</name>
        <dbReference type="ChEBI" id="CHEBI:30616"/>
    </ligand>
</feature>
<feature type="binding site" evidence="1">
    <location>
        <position position="212"/>
    </location>
    <ligand>
        <name>Zn(2+)</name>
        <dbReference type="ChEBI" id="CHEBI:29105"/>
    </ligand>
</feature>
<feature type="binding site" evidence="1">
    <location>
        <position position="220"/>
    </location>
    <ligand>
        <name>Zn(2+)</name>
        <dbReference type="ChEBI" id="CHEBI:29105"/>
    </ligand>
</feature>
<feature type="binding site" evidence="1">
    <location>
        <position position="223"/>
    </location>
    <ligand>
        <name>Zn(2+)</name>
        <dbReference type="ChEBI" id="CHEBI:29105"/>
    </ligand>
</feature>
<feature type="binding site" evidence="1">
    <location>
        <position position="226"/>
    </location>
    <ligand>
        <name>Zn(2+)</name>
        <dbReference type="ChEBI" id="CHEBI:29105"/>
    </ligand>
</feature>
<reference key="1">
    <citation type="journal article" date="2011" name="Stand. Genomic Sci.">
        <title>Complete genome sequence of the halophilic and highly halotolerant Chromohalobacter salexigens type strain (1H11(T)).</title>
        <authorList>
            <person name="Copeland A."/>
            <person name="O'Connor K."/>
            <person name="Lucas S."/>
            <person name="Lapidus A."/>
            <person name="Berry K.W."/>
            <person name="Detter J.C."/>
            <person name="Del Rio T.G."/>
            <person name="Hammon N."/>
            <person name="Dalin E."/>
            <person name="Tice H."/>
            <person name="Pitluck S."/>
            <person name="Bruce D."/>
            <person name="Goodwin L."/>
            <person name="Han C."/>
            <person name="Tapia R."/>
            <person name="Saunders E."/>
            <person name="Schmutz J."/>
            <person name="Brettin T."/>
            <person name="Larimer F."/>
            <person name="Land M."/>
            <person name="Hauser L."/>
            <person name="Vargas C."/>
            <person name="Nieto J.J."/>
            <person name="Kyrpides N.C."/>
            <person name="Ivanova N."/>
            <person name="Goker M."/>
            <person name="Klenk H.P."/>
            <person name="Csonka L.N."/>
            <person name="Woyke T."/>
        </authorList>
    </citation>
    <scope>NUCLEOTIDE SEQUENCE [LARGE SCALE GENOMIC DNA]</scope>
    <source>
        <strain>ATCC BAA-138 / DSM 3043 / CIP 106854 / NCIMB 13768 / 1H11</strain>
    </source>
</reference>
<protein>
    <recommendedName>
        <fullName evidence="1">7-cyano-7-deazaguanine synthase</fullName>
        <ecNumber evidence="1">6.3.4.20</ecNumber>
    </recommendedName>
    <alternativeName>
        <fullName evidence="1">7-cyano-7-carbaguanine synthase</fullName>
    </alternativeName>
    <alternativeName>
        <fullName evidence="1">PreQ(0) synthase</fullName>
    </alternativeName>
    <alternativeName>
        <fullName evidence="1">Queuosine biosynthesis protein QueC</fullName>
    </alternativeName>
</protein>
<keyword id="KW-0067">ATP-binding</keyword>
<keyword id="KW-0436">Ligase</keyword>
<keyword id="KW-0479">Metal-binding</keyword>
<keyword id="KW-0547">Nucleotide-binding</keyword>
<keyword id="KW-0671">Queuosine biosynthesis</keyword>
<keyword id="KW-1185">Reference proteome</keyword>
<keyword id="KW-0862">Zinc</keyword>
<comment type="function">
    <text evidence="1">Catalyzes the ATP-dependent conversion of 7-carboxy-7-deazaguanine (CDG) to 7-cyano-7-deazaguanine (preQ(0)).</text>
</comment>
<comment type="catalytic activity">
    <reaction evidence="1">
        <text>7-carboxy-7-deazaguanine + NH4(+) + ATP = 7-cyano-7-deazaguanine + ADP + phosphate + H2O + H(+)</text>
        <dbReference type="Rhea" id="RHEA:27982"/>
        <dbReference type="ChEBI" id="CHEBI:15377"/>
        <dbReference type="ChEBI" id="CHEBI:15378"/>
        <dbReference type="ChEBI" id="CHEBI:28938"/>
        <dbReference type="ChEBI" id="CHEBI:30616"/>
        <dbReference type="ChEBI" id="CHEBI:43474"/>
        <dbReference type="ChEBI" id="CHEBI:45075"/>
        <dbReference type="ChEBI" id="CHEBI:61036"/>
        <dbReference type="ChEBI" id="CHEBI:456216"/>
        <dbReference type="EC" id="6.3.4.20"/>
    </reaction>
</comment>
<comment type="cofactor">
    <cofactor evidence="1">
        <name>Zn(2+)</name>
        <dbReference type="ChEBI" id="CHEBI:29105"/>
    </cofactor>
    <text evidence="1">Binds 1 zinc ion per subunit.</text>
</comment>
<comment type="pathway">
    <text evidence="1">Purine metabolism; 7-cyano-7-deazaguanine biosynthesis.</text>
</comment>
<comment type="similarity">
    <text evidence="1">Belongs to the QueC family.</text>
</comment>
<organism>
    <name type="scientific">Chromohalobacter salexigens (strain ATCC BAA-138 / DSM 3043 / CIP 106854 / NCIMB 13768 / 1H11)</name>
    <dbReference type="NCBI Taxonomy" id="290398"/>
    <lineage>
        <taxon>Bacteria</taxon>
        <taxon>Pseudomonadati</taxon>
        <taxon>Pseudomonadota</taxon>
        <taxon>Gammaproteobacteria</taxon>
        <taxon>Oceanospirillales</taxon>
        <taxon>Halomonadaceae</taxon>
        <taxon>Chromohalobacter</taxon>
    </lineage>
</organism>
<gene>
    <name evidence="1" type="primary">queC</name>
    <name type="ordered locus">Csal_2038</name>
</gene>
<sequence>MSDLPRHSPRRQHAGESAVTAITSPEDTTKAVVIYSGGMDSYTVLHRALRAGFEVHALSFHYGQRHSRELETAHDVCQRLGIAHQVVDIRAIHGLIGNSALTDATQTMPDGDYDADNMAATVVPNRNMILLSLAIGHAVNIGANVCFYGAHGGDHVLYPDCRPEFVERMNDVAAIADFTPVRIAAPYLHASKEEILADGLAMGLDYAQTWTCYLGAERSCGHCGSCRERLAAFAAQGVTDPLVYAGAGASD</sequence>
<proteinExistence type="inferred from homology"/>
<accession>Q1QVW9</accession>